<dbReference type="EMBL" id="CP001472">
    <property type="protein sequence ID" value="ACO32325.1"/>
    <property type="molecule type" value="Genomic_DNA"/>
</dbReference>
<dbReference type="RefSeq" id="WP_015896585.1">
    <property type="nucleotide sequence ID" value="NC_012483.1"/>
</dbReference>
<dbReference type="SMR" id="C1F643"/>
<dbReference type="FunCoup" id="C1F643">
    <property type="interactions" value="614"/>
</dbReference>
<dbReference type="STRING" id="240015.ACP_1452"/>
<dbReference type="KEGG" id="aca:ACP_1452"/>
<dbReference type="eggNOG" id="COG0051">
    <property type="taxonomic scope" value="Bacteria"/>
</dbReference>
<dbReference type="HOGENOM" id="CLU_122625_1_3_0"/>
<dbReference type="InParanoid" id="C1F643"/>
<dbReference type="OrthoDB" id="9804464at2"/>
<dbReference type="Proteomes" id="UP000002207">
    <property type="component" value="Chromosome"/>
</dbReference>
<dbReference type="GO" id="GO:1990904">
    <property type="term" value="C:ribonucleoprotein complex"/>
    <property type="evidence" value="ECO:0007669"/>
    <property type="project" value="UniProtKB-KW"/>
</dbReference>
<dbReference type="GO" id="GO:0005840">
    <property type="term" value="C:ribosome"/>
    <property type="evidence" value="ECO:0007669"/>
    <property type="project" value="UniProtKB-KW"/>
</dbReference>
<dbReference type="GO" id="GO:0003735">
    <property type="term" value="F:structural constituent of ribosome"/>
    <property type="evidence" value="ECO:0007669"/>
    <property type="project" value="InterPro"/>
</dbReference>
<dbReference type="GO" id="GO:0000049">
    <property type="term" value="F:tRNA binding"/>
    <property type="evidence" value="ECO:0007669"/>
    <property type="project" value="UniProtKB-UniRule"/>
</dbReference>
<dbReference type="GO" id="GO:0006412">
    <property type="term" value="P:translation"/>
    <property type="evidence" value="ECO:0007669"/>
    <property type="project" value="UniProtKB-UniRule"/>
</dbReference>
<dbReference type="FunFam" id="3.30.70.600:FF:000001">
    <property type="entry name" value="30S ribosomal protein S10"/>
    <property type="match status" value="1"/>
</dbReference>
<dbReference type="Gene3D" id="3.30.70.600">
    <property type="entry name" value="Ribosomal protein S10 domain"/>
    <property type="match status" value="1"/>
</dbReference>
<dbReference type="HAMAP" id="MF_00508">
    <property type="entry name" value="Ribosomal_uS10"/>
    <property type="match status" value="1"/>
</dbReference>
<dbReference type="InterPro" id="IPR001848">
    <property type="entry name" value="Ribosomal_uS10"/>
</dbReference>
<dbReference type="InterPro" id="IPR018268">
    <property type="entry name" value="Ribosomal_uS10_CS"/>
</dbReference>
<dbReference type="InterPro" id="IPR027486">
    <property type="entry name" value="Ribosomal_uS10_dom"/>
</dbReference>
<dbReference type="InterPro" id="IPR036838">
    <property type="entry name" value="Ribosomal_uS10_dom_sf"/>
</dbReference>
<dbReference type="NCBIfam" id="NF001861">
    <property type="entry name" value="PRK00596.1"/>
    <property type="match status" value="1"/>
</dbReference>
<dbReference type="NCBIfam" id="TIGR01049">
    <property type="entry name" value="rpsJ_bact"/>
    <property type="match status" value="1"/>
</dbReference>
<dbReference type="PANTHER" id="PTHR11700">
    <property type="entry name" value="30S RIBOSOMAL PROTEIN S10 FAMILY MEMBER"/>
    <property type="match status" value="1"/>
</dbReference>
<dbReference type="Pfam" id="PF00338">
    <property type="entry name" value="Ribosomal_S10"/>
    <property type="match status" value="1"/>
</dbReference>
<dbReference type="PRINTS" id="PR00971">
    <property type="entry name" value="RIBOSOMALS10"/>
</dbReference>
<dbReference type="SMART" id="SM01403">
    <property type="entry name" value="Ribosomal_S10"/>
    <property type="match status" value="1"/>
</dbReference>
<dbReference type="SUPFAM" id="SSF54999">
    <property type="entry name" value="Ribosomal protein S10"/>
    <property type="match status" value="1"/>
</dbReference>
<dbReference type="PROSITE" id="PS00361">
    <property type="entry name" value="RIBOSOMAL_S10"/>
    <property type="match status" value="1"/>
</dbReference>
<evidence type="ECO:0000255" key="1">
    <source>
        <dbReference type="HAMAP-Rule" id="MF_00508"/>
    </source>
</evidence>
<evidence type="ECO:0000305" key="2"/>
<feature type="chain" id="PRO_1000206574" description="Small ribosomal subunit protein uS10">
    <location>
        <begin position="1"/>
        <end position="105"/>
    </location>
</feature>
<comment type="function">
    <text evidence="1">Involved in the binding of tRNA to the ribosomes.</text>
</comment>
<comment type="subunit">
    <text evidence="1">Part of the 30S ribosomal subunit.</text>
</comment>
<comment type="similarity">
    <text evidence="1">Belongs to the universal ribosomal protein uS10 family.</text>
</comment>
<name>RS10_ACIC5</name>
<organism>
    <name type="scientific">Acidobacterium capsulatum (strain ATCC 51196 / DSM 11244 / BCRC 80197 / JCM 7670 / NBRC 15755 / NCIMB 13165 / 161)</name>
    <dbReference type="NCBI Taxonomy" id="240015"/>
    <lineage>
        <taxon>Bacteria</taxon>
        <taxon>Pseudomonadati</taxon>
        <taxon>Acidobacteriota</taxon>
        <taxon>Terriglobia</taxon>
        <taxon>Terriglobales</taxon>
        <taxon>Acidobacteriaceae</taxon>
        <taxon>Acidobacterium</taxon>
    </lineage>
</organism>
<accession>C1F643</accession>
<reference key="1">
    <citation type="journal article" date="2009" name="Appl. Environ. Microbiol.">
        <title>Three genomes from the phylum Acidobacteria provide insight into the lifestyles of these microorganisms in soils.</title>
        <authorList>
            <person name="Ward N.L."/>
            <person name="Challacombe J.F."/>
            <person name="Janssen P.H."/>
            <person name="Henrissat B."/>
            <person name="Coutinho P.M."/>
            <person name="Wu M."/>
            <person name="Xie G."/>
            <person name="Haft D.H."/>
            <person name="Sait M."/>
            <person name="Badger J."/>
            <person name="Barabote R.D."/>
            <person name="Bradley B."/>
            <person name="Brettin T.S."/>
            <person name="Brinkac L.M."/>
            <person name="Bruce D."/>
            <person name="Creasy T."/>
            <person name="Daugherty S.C."/>
            <person name="Davidsen T.M."/>
            <person name="DeBoy R.T."/>
            <person name="Detter J.C."/>
            <person name="Dodson R.J."/>
            <person name="Durkin A.S."/>
            <person name="Ganapathy A."/>
            <person name="Gwinn-Giglio M."/>
            <person name="Han C.S."/>
            <person name="Khouri H."/>
            <person name="Kiss H."/>
            <person name="Kothari S.P."/>
            <person name="Madupu R."/>
            <person name="Nelson K.E."/>
            <person name="Nelson W.C."/>
            <person name="Paulsen I."/>
            <person name="Penn K."/>
            <person name="Ren Q."/>
            <person name="Rosovitz M.J."/>
            <person name="Selengut J.D."/>
            <person name="Shrivastava S."/>
            <person name="Sullivan S.A."/>
            <person name="Tapia R."/>
            <person name="Thompson L.S."/>
            <person name="Watkins K.L."/>
            <person name="Yang Q."/>
            <person name="Yu C."/>
            <person name="Zafar N."/>
            <person name="Zhou L."/>
            <person name="Kuske C.R."/>
        </authorList>
    </citation>
    <scope>NUCLEOTIDE SEQUENCE [LARGE SCALE GENOMIC DNA]</scope>
    <source>
        <strain>ATCC 51196 / DSM 11244 / BCRC 80197 / JCM 7670 / NBRC 15755 / NCIMB 13165 / 161</strain>
    </source>
</reference>
<proteinExistence type="inferred from homology"/>
<keyword id="KW-1185">Reference proteome</keyword>
<keyword id="KW-0687">Ribonucleoprotein</keyword>
<keyword id="KW-0689">Ribosomal protein</keyword>
<gene>
    <name evidence="1" type="primary">rpsJ</name>
    <name type="ordered locus">ACP_1452</name>
</gene>
<sequence>MVGQRIRIRLKAYDYRVLDTSTGEIVDTAKRTGAQVAGPIPLPTVKNKYCVLRSPHVDKKSREAFEIRTHKRLIDILEPTQQTVDALMRLDLPAGVDVEIKAFEK</sequence>
<protein>
    <recommendedName>
        <fullName evidence="1">Small ribosomal subunit protein uS10</fullName>
    </recommendedName>
    <alternativeName>
        <fullName evidence="2">30S ribosomal protein S10</fullName>
    </alternativeName>
</protein>